<proteinExistence type="inferred from homology"/>
<reference key="1">
    <citation type="journal article" date="1991" name="J. Gen. Virol.">
        <title>An orf virus sequence showing homology to the 14K 'fusion' protein of vaccinia virus.</title>
        <authorList>
            <person name="Naase M."/>
            <person name="Nicholson B.H."/>
            <person name="Fraser K.M."/>
            <person name="Mercer A.A."/>
            <person name="Robinson A.J."/>
        </authorList>
    </citation>
    <scope>NUCLEOTIDE SEQUENCE</scope>
</reference>
<evidence type="ECO:0000250" key="1"/>
<evidence type="ECO:0000250" key="2">
    <source>
        <dbReference type="UniProtKB" id="P26312"/>
    </source>
</evidence>
<evidence type="ECO:0000255" key="3"/>
<evidence type="ECO:0000256" key="4">
    <source>
        <dbReference type="SAM" id="MobiDB-lite"/>
    </source>
</evidence>
<evidence type="ECO:0000305" key="5"/>
<feature type="chain" id="PRO_0000099216" description="10 kDa fusion protein">
    <location>
        <begin position="1"/>
        <end position="89"/>
    </location>
</feature>
<feature type="region of interest" description="Disordered" evidence="4">
    <location>
        <begin position="1"/>
        <end position="29"/>
    </location>
</feature>
<feature type="compositionally biased region" description="Polar residues" evidence="4">
    <location>
        <begin position="9"/>
        <end position="22"/>
    </location>
</feature>
<feature type="glycosylation site" description="N-linked (GlcNAc...) asparagine; by host" evidence="3">
    <location>
        <position position="18"/>
    </location>
</feature>
<name>VFUS_ORFN2</name>
<dbReference type="PIR" id="A38711">
    <property type="entry name" value="WMVZRF"/>
</dbReference>
<dbReference type="SMR" id="P26654"/>
<dbReference type="GO" id="GO:0016020">
    <property type="term" value="C:membrane"/>
    <property type="evidence" value="ECO:0007669"/>
    <property type="project" value="UniProtKB-KW"/>
</dbReference>
<dbReference type="GO" id="GO:0019031">
    <property type="term" value="C:viral envelope"/>
    <property type="evidence" value="ECO:0007669"/>
    <property type="project" value="InterPro"/>
</dbReference>
<dbReference type="GO" id="GO:0055036">
    <property type="term" value="C:virion membrane"/>
    <property type="evidence" value="ECO:0007669"/>
    <property type="project" value="UniProtKB-SubCell"/>
</dbReference>
<dbReference type="GO" id="GO:0019064">
    <property type="term" value="P:fusion of virus membrane with host plasma membrane"/>
    <property type="evidence" value="ECO:0007669"/>
    <property type="project" value="InterPro"/>
</dbReference>
<dbReference type="GO" id="GO:0046718">
    <property type="term" value="P:symbiont entry into host cell"/>
    <property type="evidence" value="ECO:0007669"/>
    <property type="project" value="UniProtKB-KW"/>
</dbReference>
<dbReference type="GO" id="GO:0019062">
    <property type="term" value="P:virion attachment to host cell"/>
    <property type="evidence" value="ECO:0007669"/>
    <property type="project" value="UniProtKB-KW"/>
</dbReference>
<dbReference type="InterPro" id="IPR003436">
    <property type="entry name" value="Chordopox_Fusion/A27"/>
</dbReference>
<dbReference type="Pfam" id="PF02346">
    <property type="entry name" value="Vac_Fusion"/>
    <property type="match status" value="1"/>
</dbReference>
<dbReference type="PRINTS" id="PR01847">
    <property type="entry name" value="VIRALFUSION"/>
</dbReference>
<organismHost>
    <name type="scientific">Capra hircus</name>
    <name type="common">Goat</name>
    <dbReference type="NCBI Taxonomy" id="9925"/>
</organismHost>
<organismHost>
    <name type="scientific">Homo sapiens</name>
    <name type="common">Human</name>
    <dbReference type="NCBI Taxonomy" id="9606"/>
</organismHost>
<organismHost>
    <name type="scientific">Ovis aries</name>
    <name type="common">Sheep</name>
    <dbReference type="NCBI Taxonomy" id="9940"/>
</organismHost>
<organism>
    <name type="scientific">Orf virus (strain NZ2)</name>
    <name type="common">OV NZ-2</name>
    <dbReference type="NCBI Taxonomy" id="10259"/>
    <lineage>
        <taxon>Viruses</taxon>
        <taxon>Varidnaviria</taxon>
        <taxon>Bamfordvirae</taxon>
        <taxon>Nucleocytoviricota</taxon>
        <taxon>Pokkesviricetes</taxon>
        <taxon>Chitovirales</taxon>
        <taxon>Poxviridae</taxon>
        <taxon>Chordopoxvirinae</taxon>
        <taxon>Parapoxvirus</taxon>
        <taxon>Orf virus</taxon>
    </lineage>
</organism>
<protein>
    <recommendedName>
        <fullName>10 kDa fusion protein</fullName>
    </recommendedName>
</protein>
<sequence>MDENDGENLLTQPDDTGNSTNGVYAAGAPTKESVEERLVSLLDSYKTITDCCRETGNRLDRLERHLESLRKALLDLNRKIDVQTGYSRY</sequence>
<comment type="subunit">
    <text evidence="1">Homotrimer, covalently linked.</text>
</comment>
<comment type="subcellular location">
    <subcellularLocation>
        <location evidence="2">Virion membrane</location>
    </subcellularLocation>
</comment>
<comment type="similarity">
    <text evidence="5">Belongs to the poxviruses fusion protein family.</text>
</comment>
<keyword id="KW-0325">Glycoprotein</keyword>
<keyword id="KW-0945">Host-virus interaction</keyword>
<keyword id="KW-0426">Late protein</keyword>
<keyword id="KW-0472">Membrane</keyword>
<keyword id="KW-1161">Viral attachment to host cell</keyword>
<keyword id="KW-0946">Virion</keyword>
<keyword id="KW-1160">Virus entry into host cell</keyword>
<accession>P26654</accession>